<comment type="function">
    <text evidence="1">One of the primary rRNA binding proteins, it binds directly to 16S rRNA where it nucleates assembly of the body of the 30S subunit.</text>
</comment>
<comment type="function">
    <text evidence="1">With S5 and S12 plays an important role in translational accuracy.</text>
</comment>
<comment type="subunit">
    <text evidence="1">Part of the 30S ribosomal subunit. Contacts protein S5. The interaction surface between S4 and S5 is involved in control of translational fidelity.</text>
</comment>
<comment type="similarity">
    <text evidence="1">Belongs to the universal ribosomal protein uS4 family.</text>
</comment>
<accession>A5I7D0</accession>
<accession>A7G8L5</accession>
<evidence type="ECO:0000255" key="1">
    <source>
        <dbReference type="HAMAP-Rule" id="MF_01306"/>
    </source>
</evidence>
<evidence type="ECO:0000305" key="2"/>
<keyword id="KW-1185">Reference proteome</keyword>
<keyword id="KW-0687">Ribonucleoprotein</keyword>
<keyword id="KW-0689">Ribosomal protein</keyword>
<keyword id="KW-0694">RNA-binding</keyword>
<keyword id="KW-0699">rRNA-binding</keyword>
<organism>
    <name type="scientific">Clostridium botulinum (strain Hall / ATCC 3502 / NCTC 13319 / Type A)</name>
    <dbReference type="NCBI Taxonomy" id="441771"/>
    <lineage>
        <taxon>Bacteria</taxon>
        <taxon>Bacillati</taxon>
        <taxon>Bacillota</taxon>
        <taxon>Clostridia</taxon>
        <taxon>Eubacteriales</taxon>
        <taxon>Clostridiaceae</taxon>
        <taxon>Clostridium</taxon>
    </lineage>
</organism>
<dbReference type="EMBL" id="CP000727">
    <property type="protein sequence ID" value="ABS38385.1"/>
    <property type="molecule type" value="Genomic_DNA"/>
</dbReference>
<dbReference type="EMBL" id="AM412317">
    <property type="protein sequence ID" value="CAL84965.1"/>
    <property type="molecule type" value="Genomic_DNA"/>
</dbReference>
<dbReference type="RefSeq" id="YP_001255887.1">
    <property type="nucleotide sequence ID" value="NC_009495.1"/>
</dbReference>
<dbReference type="RefSeq" id="YP_001389130.1">
    <property type="nucleotide sequence ID" value="NC_009698.1"/>
</dbReference>
<dbReference type="SMR" id="A5I7D0"/>
<dbReference type="GeneID" id="5187000"/>
<dbReference type="KEGG" id="cbh:CLC_3350"/>
<dbReference type="KEGG" id="cbo:CBO3405"/>
<dbReference type="PATRIC" id="fig|413999.7.peg.3381"/>
<dbReference type="HOGENOM" id="CLU_092403_0_1_9"/>
<dbReference type="PRO" id="PR:A5I7D0"/>
<dbReference type="Proteomes" id="UP000001986">
    <property type="component" value="Chromosome"/>
</dbReference>
<dbReference type="GO" id="GO:0015935">
    <property type="term" value="C:small ribosomal subunit"/>
    <property type="evidence" value="ECO:0000318"/>
    <property type="project" value="GO_Central"/>
</dbReference>
<dbReference type="GO" id="GO:0019843">
    <property type="term" value="F:rRNA binding"/>
    <property type="evidence" value="ECO:0000318"/>
    <property type="project" value="GO_Central"/>
</dbReference>
<dbReference type="GO" id="GO:0003735">
    <property type="term" value="F:structural constituent of ribosome"/>
    <property type="evidence" value="ECO:0000318"/>
    <property type="project" value="GO_Central"/>
</dbReference>
<dbReference type="GO" id="GO:0042274">
    <property type="term" value="P:ribosomal small subunit biogenesis"/>
    <property type="evidence" value="ECO:0000318"/>
    <property type="project" value="GO_Central"/>
</dbReference>
<dbReference type="GO" id="GO:0006412">
    <property type="term" value="P:translation"/>
    <property type="evidence" value="ECO:0007669"/>
    <property type="project" value="UniProtKB-UniRule"/>
</dbReference>
<dbReference type="CDD" id="cd00165">
    <property type="entry name" value="S4"/>
    <property type="match status" value="1"/>
</dbReference>
<dbReference type="FunFam" id="3.10.290.10:FF:000001">
    <property type="entry name" value="30S ribosomal protein S4"/>
    <property type="match status" value="1"/>
</dbReference>
<dbReference type="Gene3D" id="1.10.1050.10">
    <property type="entry name" value="Ribosomal Protein S4 Delta 41, Chain A, domain 1"/>
    <property type="match status" value="1"/>
</dbReference>
<dbReference type="Gene3D" id="3.10.290.10">
    <property type="entry name" value="RNA-binding S4 domain"/>
    <property type="match status" value="1"/>
</dbReference>
<dbReference type="HAMAP" id="MF_01306_B">
    <property type="entry name" value="Ribosomal_uS4_B"/>
    <property type="match status" value="1"/>
</dbReference>
<dbReference type="InterPro" id="IPR022801">
    <property type="entry name" value="Ribosomal_uS4"/>
</dbReference>
<dbReference type="InterPro" id="IPR005709">
    <property type="entry name" value="Ribosomal_uS4_bac-type"/>
</dbReference>
<dbReference type="InterPro" id="IPR001912">
    <property type="entry name" value="Ribosomal_uS4_N"/>
</dbReference>
<dbReference type="InterPro" id="IPR002942">
    <property type="entry name" value="S4_RNA-bd"/>
</dbReference>
<dbReference type="InterPro" id="IPR036986">
    <property type="entry name" value="S4_RNA-bd_sf"/>
</dbReference>
<dbReference type="NCBIfam" id="NF003717">
    <property type="entry name" value="PRK05327.1"/>
    <property type="match status" value="1"/>
</dbReference>
<dbReference type="NCBIfam" id="TIGR01017">
    <property type="entry name" value="rpsD_bact"/>
    <property type="match status" value="1"/>
</dbReference>
<dbReference type="PANTHER" id="PTHR11831">
    <property type="entry name" value="30S 40S RIBOSOMAL PROTEIN"/>
    <property type="match status" value="1"/>
</dbReference>
<dbReference type="PANTHER" id="PTHR11831:SF4">
    <property type="entry name" value="SMALL RIBOSOMAL SUBUNIT PROTEIN US4M"/>
    <property type="match status" value="1"/>
</dbReference>
<dbReference type="Pfam" id="PF00163">
    <property type="entry name" value="Ribosomal_S4"/>
    <property type="match status" value="1"/>
</dbReference>
<dbReference type="Pfam" id="PF01479">
    <property type="entry name" value="S4"/>
    <property type="match status" value="1"/>
</dbReference>
<dbReference type="SMART" id="SM01390">
    <property type="entry name" value="Ribosomal_S4"/>
    <property type="match status" value="1"/>
</dbReference>
<dbReference type="SMART" id="SM00363">
    <property type="entry name" value="S4"/>
    <property type="match status" value="1"/>
</dbReference>
<dbReference type="SUPFAM" id="SSF55174">
    <property type="entry name" value="Alpha-L RNA-binding motif"/>
    <property type="match status" value="1"/>
</dbReference>
<dbReference type="PROSITE" id="PS50889">
    <property type="entry name" value="S4"/>
    <property type="match status" value="1"/>
</dbReference>
<name>RS4B_CLOBH</name>
<gene>
    <name evidence="1" type="primary">rpsD2</name>
    <name type="ordered locus">CBO3405</name>
    <name type="ordered locus">CLC_3350</name>
</gene>
<sequence>MAKIRDPRFKLSRRLGVNIYGHPKAMKRATRENSREGKKLSNYGKQLLEKQKIRSYYGVLEKQFLRYVKKAMKSKERTGDVLLRSLECRLDNIAYRIGFANSIRQARQMVNHGHILVNGSKVNIPSYEVKTGDVITLREKYRKNDEFADNFLALKKFSLPYIEKDYDKFSGVLIKEPERDEIPIDANETLVVELYSK</sequence>
<feature type="chain" id="PRO_0000322288" description="Small ribosomal subunit protein uS4B">
    <location>
        <begin position="1"/>
        <end position="197"/>
    </location>
</feature>
<feature type="domain" description="S4 RNA-binding" evidence="1">
    <location>
        <begin position="88"/>
        <end position="151"/>
    </location>
</feature>
<proteinExistence type="inferred from homology"/>
<reference key="1">
    <citation type="journal article" date="2007" name="Genome Res.">
        <title>Genome sequence of a proteolytic (Group I) Clostridium botulinum strain Hall A and comparative analysis of the clostridial genomes.</title>
        <authorList>
            <person name="Sebaihia M."/>
            <person name="Peck M.W."/>
            <person name="Minton N.P."/>
            <person name="Thomson N.R."/>
            <person name="Holden M.T.G."/>
            <person name="Mitchell W.J."/>
            <person name="Carter A.T."/>
            <person name="Bentley S.D."/>
            <person name="Mason D.R."/>
            <person name="Crossman L."/>
            <person name="Paul C.J."/>
            <person name="Ivens A."/>
            <person name="Wells-Bennik M.H.J."/>
            <person name="Davis I.J."/>
            <person name="Cerdeno-Tarraga A.M."/>
            <person name="Churcher C."/>
            <person name="Quail M.A."/>
            <person name="Chillingworth T."/>
            <person name="Feltwell T."/>
            <person name="Fraser A."/>
            <person name="Goodhead I."/>
            <person name="Hance Z."/>
            <person name="Jagels K."/>
            <person name="Larke N."/>
            <person name="Maddison M."/>
            <person name="Moule S."/>
            <person name="Mungall K."/>
            <person name="Norbertczak H."/>
            <person name="Rabbinowitsch E."/>
            <person name="Sanders M."/>
            <person name="Simmonds M."/>
            <person name="White B."/>
            <person name="Whithead S."/>
            <person name="Parkhill J."/>
        </authorList>
    </citation>
    <scope>NUCLEOTIDE SEQUENCE [LARGE SCALE GENOMIC DNA]</scope>
    <source>
        <strain>Hall / ATCC 3502 / NCTC 13319 / Type A</strain>
    </source>
</reference>
<reference key="2">
    <citation type="journal article" date="2007" name="PLoS ONE">
        <title>Analysis of the neurotoxin complex genes in Clostridium botulinum A1-A4 and B1 strains: BoNT/A3, /Ba4 and /B1 clusters are located within plasmids.</title>
        <authorList>
            <person name="Smith T.J."/>
            <person name="Hill K.K."/>
            <person name="Foley B.T."/>
            <person name="Detter J.C."/>
            <person name="Munk A.C."/>
            <person name="Bruce D.C."/>
            <person name="Doggett N.A."/>
            <person name="Smith L.A."/>
            <person name="Marks J.D."/>
            <person name="Xie G."/>
            <person name="Brettin T.S."/>
        </authorList>
    </citation>
    <scope>NUCLEOTIDE SEQUENCE [LARGE SCALE GENOMIC DNA]</scope>
    <source>
        <strain>Hall / ATCC 3502 / NCTC 13319 / Type A</strain>
    </source>
</reference>
<protein>
    <recommendedName>
        <fullName evidence="1">Small ribosomal subunit protein uS4B</fullName>
    </recommendedName>
    <alternativeName>
        <fullName evidence="2">30S ribosomal protein S4 2</fullName>
    </alternativeName>
</protein>